<dbReference type="EC" id="2.4.2.-" evidence="1"/>
<dbReference type="EC" id="2.4.2.22" evidence="1"/>
<dbReference type="EMBL" id="FM178379">
    <property type="protein sequence ID" value="CAQ78660.1"/>
    <property type="molecule type" value="Genomic_DNA"/>
</dbReference>
<dbReference type="RefSeq" id="WP_012549739.1">
    <property type="nucleotide sequence ID" value="NC_011312.1"/>
</dbReference>
<dbReference type="SMR" id="B6EIE9"/>
<dbReference type="KEGG" id="vsa:VSAL_I0975"/>
<dbReference type="eggNOG" id="COG2236">
    <property type="taxonomic scope" value="Bacteria"/>
</dbReference>
<dbReference type="HOGENOM" id="CLU_080904_3_0_6"/>
<dbReference type="UniPathway" id="UPA00602">
    <property type="reaction ID" value="UER00658"/>
</dbReference>
<dbReference type="UniPathway" id="UPA00909">
    <property type="reaction ID" value="UER00887"/>
</dbReference>
<dbReference type="Proteomes" id="UP000001730">
    <property type="component" value="Chromosome 1"/>
</dbReference>
<dbReference type="GO" id="GO:0005829">
    <property type="term" value="C:cytosol"/>
    <property type="evidence" value="ECO:0007669"/>
    <property type="project" value="TreeGrafter"/>
</dbReference>
<dbReference type="GO" id="GO:0005886">
    <property type="term" value="C:plasma membrane"/>
    <property type="evidence" value="ECO:0007669"/>
    <property type="project" value="UniProtKB-SubCell"/>
</dbReference>
<dbReference type="GO" id="GO:0052657">
    <property type="term" value="F:guanine phosphoribosyltransferase activity"/>
    <property type="evidence" value="ECO:0007669"/>
    <property type="project" value="RHEA"/>
</dbReference>
<dbReference type="GO" id="GO:0004422">
    <property type="term" value="F:hypoxanthine phosphoribosyltransferase activity"/>
    <property type="evidence" value="ECO:0007669"/>
    <property type="project" value="RHEA"/>
</dbReference>
<dbReference type="GO" id="GO:0000287">
    <property type="term" value="F:magnesium ion binding"/>
    <property type="evidence" value="ECO:0007669"/>
    <property type="project" value="UniProtKB-UniRule"/>
</dbReference>
<dbReference type="GO" id="GO:0000310">
    <property type="term" value="F:xanthine phosphoribosyltransferase activity"/>
    <property type="evidence" value="ECO:0007669"/>
    <property type="project" value="UniProtKB-UniRule"/>
</dbReference>
<dbReference type="GO" id="GO:0032263">
    <property type="term" value="P:GMP salvage"/>
    <property type="evidence" value="ECO:0007669"/>
    <property type="project" value="UniProtKB-UniRule"/>
</dbReference>
<dbReference type="GO" id="GO:0032264">
    <property type="term" value="P:IMP salvage"/>
    <property type="evidence" value="ECO:0007669"/>
    <property type="project" value="TreeGrafter"/>
</dbReference>
<dbReference type="GO" id="GO:0006166">
    <property type="term" value="P:purine ribonucleoside salvage"/>
    <property type="evidence" value="ECO:0007669"/>
    <property type="project" value="UniProtKB-KW"/>
</dbReference>
<dbReference type="GO" id="GO:0032265">
    <property type="term" value="P:XMP salvage"/>
    <property type="evidence" value="ECO:0007669"/>
    <property type="project" value="UniProtKB-UniRule"/>
</dbReference>
<dbReference type="CDD" id="cd06223">
    <property type="entry name" value="PRTases_typeI"/>
    <property type="match status" value="1"/>
</dbReference>
<dbReference type="Gene3D" id="3.40.50.2020">
    <property type="match status" value="1"/>
</dbReference>
<dbReference type="HAMAP" id="MF_01903">
    <property type="entry name" value="XGPRT"/>
    <property type="match status" value="1"/>
</dbReference>
<dbReference type="InterPro" id="IPR000836">
    <property type="entry name" value="PRibTrfase_dom"/>
</dbReference>
<dbReference type="InterPro" id="IPR029057">
    <property type="entry name" value="PRTase-like"/>
</dbReference>
<dbReference type="InterPro" id="IPR023747">
    <property type="entry name" value="Xanthine_Guanine_PRibTrfase"/>
</dbReference>
<dbReference type="NCBIfam" id="NF006613">
    <property type="entry name" value="PRK09177.1"/>
    <property type="match status" value="1"/>
</dbReference>
<dbReference type="PANTHER" id="PTHR39563">
    <property type="entry name" value="XANTHINE PHOSPHORIBOSYLTRANSFERASE"/>
    <property type="match status" value="1"/>
</dbReference>
<dbReference type="PANTHER" id="PTHR39563:SF1">
    <property type="entry name" value="XANTHINE-GUANINE PHOSPHORIBOSYLTRANSFERASE"/>
    <property type="match status" value="1"/>
</dbReference>
<dbReference type="Pfam" id="PF00156">
    <property type="entry name" value="Pribosyltran"/>
    <property type="match status" value="1"/>
</dbReference>
<dbReference type="SUPFAM" id="SSF53271">
    <property type="entry name" value="PRTase-like"/>
    <property type="match status" value="1"/>
</dbReference>
<dbReference type="PROSITE" id="PS00103">
    <property type="entry name" value="PUR_PYR_PR_TRANSFER"/>
    <property type="match status" value="1"/>
</dbReference>
<reference key="1">
    <citation type="journal article" date="2008" name="BMC Genomics">
        <title>The genome sequence of the fish pathogen Aliivibrio salmonicida strain LFI1238 shows extensive evidence of gene decay.</title>
        <authorList>
            <person name="Hjerde E."/>
            <person name="Lorentzen M.S."/>
            <person name="Holden M.T."/>
            <person name="Seeger K."/>
            <person name="Paulsen S."/>
            <person name="Bason N."/>
            <person name="Churcher C."/>
            <person name="Harris D."/>
            <person name="Norbertczak H."/>
            <person name="Quail M.A."/>
            <person name="Sanders S."/>
            <person name="Thurston S."/>
            <person name="Parkhill J."/>
            <person name="Willassen N.P."/>
            <person name="Thomson N.R."/>
        </authorList>
    </citation>
    <scope>NUCLEOTIDE SEQUENCE [LARGE SCALE GENOMIC DNA]</scope>
    <source>
        <strain>LFI1238</strain>
    </source>
</reference>
<name>XGPT_ALISL</name>
<organism>
    <name type="scientific">Aliivibrio salmonicida (strain LFI1238)</name>
    <name type="common">Vibrio salmonicida (strain LFI1238)</name>
    <dbReference type="NCBI Taxonomy" id="316275"/>
    <lineage>
        <taxon>Bacteria</taxon>
        <taxon>Pseudomonadati</taxon>
        <taxon>Pseudomonadota</taxon>
        <taxon>Gammaproteobacteria</taxon>
        <taxon>Vibrionales</taxon>
        <taxon>Vibrionaceae</taxon>
        <taxon>Aliivibrio</taxon>
    </lineage>
</organism>
<proteinExistence type="inferred from homology"/>
<sequence length="152" mass="17076">MANKFVITWDNMQMYTRQLAEQLLPAEQWKGILAVSRGGLVPAAILARELNIRYVDTVCISSYDHDHQRDMTVVKAMEGDGEGFIIIDDLVDSGDTAVKLRQMYPKGKLVTVCAKPAGIDLVDAYVVDIPQDTWIEQPWDMAVTYVDPICKK</sequence>
<evidence type="ECO:0000255" key="1">
    <source>
        <dbReference type="HAMAP-Rule" id="MF_01903"/>
    </source>
</evidence>
<gene>
    <name evidence="1" type="primary">gpt</name>
    <name type="ordered locus">VSAL_I0975</name>
</gene>
<accession>B6EIE9</accession>
<protein>
    <recommendedName>
        <fullName evidence="1">Xanthine-guanine phosphoribosyltransferase</fullName>
        <shortName evidence="1">XGPRT</shortName>
        <ecNumber evidence="1">2.4.2.-</ecNumber>
        <ecNumber evidence="1">2.4.2.22</ecNumber>
    </recommendedName>
    <alternativeName>
        <fullName evidence="1">Xanthine phosphoribosyltransferase</fullName>
    </alternativeName>
</protein>
<comment type="function">
    <text evidence="1">Purine salvage pathway enzyme that catalyzes the transfer of the ribosyl-5-phosphate group from 5-phospho-alpha-D-ribose 1-diphosphate (PRPP) to the N9 position of the 6-oxopurines guanine and xanthine to form the corresponding ribonucleotides GMP (guanosine 5'-monophosphate) and XMP (xanthosine 5'-monophosphate), with the release of PPi. To a lesser extent, also acts on hypoxanthine.</text>
</comment>
<comment type="catalytic activity">
    <reaction evidence="1">
        <text>GMP + diphosphate = guanine + 5-phospho-alpha-D-ribose 1-diphosphate</text>
        <dbReference type="Rhea" id="RHEA:25424"/>
        <dbReference type="ChEBI" id="CHEBI:16235"/>
        <dbReference type="ChEBI" id="CHEBI:33019"/>
        <dbReference type="ChEBI" id="CHEBI:58017"/>
        <dbReference type="ChEBI" id="CHEBI:58115"/>
    </reaction>
    <physiologicalReaction direction="right-to-left" evidence="1">
        <dbReference type="Rhea" id="RHEA:25426"/>
    </physiologicalReaction>
</comment>
<comment type="catalytic activity">
    <reaction evidence="1">
        <text>XMP + diphosphate = xanthine + 5-phospho-alpha-D-ribose 1-diphosphate</text>
        <dbReference type="Rhea" id="RHEA:10800"/>
        <dbReference type="ChEBI" id="CHEBI:17712"/>
        <dbReference type="ChEBI" id="CHEBI:33019"/>
        <dbReference type="ChEBI" id="CHEBI:57464"/>
        <dbReference type="ChEBI" id="CHEBI:58017"/>
        <dbReference type="EC" id="2.4.2.22"/>
    </reaction>
    <physiologicalReaction direction="right-to-left" evidence="1">
        <dbReference type="Rhea" id="RHEA:10802"/>
    </physiologicalReaction>
</comment>
<comment type="catalytic activity">
    <reaction evidence="1">
        <text>IMP + diphosphate = hypoxanthine + 5-phospho-alpha-D-ribose 1-diphosphate</text>
        <dbReference type="Rhea" id="RHEA:17973"/>
        <dbReference type="ChEBI" id="CHEBI:17368"/>
        <dbReference type="ChEBI" id="CHEBI:33019"/>
        <dbReference type="ChEBI" id="CHEBI:58017"/>
        <dbReference type="ChEBI" id="CHEBI:58053"/>
    </reaction>
    <physiologicalReaction direction="right-to-left" evidence="1">
        <dbReference type="Rhea" id="RHEA:17975"/>
    </physiologicalReaction>
</comment>
<comment type="cofactor">
    <cofactor evidence="1">
        <name>Mg(2+)</name>
        <dbReference type="ChEBI" id="CHEBI:18420"/>
    </cofactor>
</comment>
<comment type="pathway">
    <text evidence="1">Purine metabolism; GMP biosynthesis via salvage pathway; GMP from guanine: step 1/1.</text>
</comment>
<comment type="pathway">
    <text evidence="1">Purine metabolism; XMP biosynthesis via salvage pathway; XMP from xanthine: step 1/1.</text>
</comment>
<comment type="subunit">
    <text evidence="1">Homotetramer.</text>
</comment>
<comment type="subcellular location">
    <subcellularLocation>
        <location evidence="1">Cell inner membrane</location>
        <topology evidence="1">Peripheral membrane protein</topology>
    </subcellularLocation>
</comment>
<comment type="similarity">
    <text evidence="1">Belongs to the purine/pyrimidine phosphoribosyltransferase family. XGPT subfamily.</text>
</comment>
<feature type="chain" id="PRO_1000188736" description="Xanthine-guanine phosphoribosyltransferase">
    <location>
        <begin position="1"/>
        <end position="152"/>
    </location>
</feature>
<feature type="binding site" evidence="1">
    <location>
        <begin position="37"/>
        <end position="38"/>
    </location>
    <ligand>
        <name>5-phospho-alpha-D-ribose 1-diphosphate</name>
        <dbReference type="ChEBI" id="CHEBI:58017"/>
    </ligand>
</feature>
<feature type="binding site" evidence="1">
    <location>
        <position position="69"/>
    </location>
    <ligand>
        <name>5-phospho-alpha-D-ribose 1-diphosphate</name>
        <dbReference type="ChEBI" id="CHEBI:58017"/>
    </ligand>
</feature>
<feature type="binding site" evidence="1">
    <location>
        <position position="69"/>
    </location>
    <ligand>
        <name>GMP</name>
        <dbReference type="ChEBI" id="CHEBI:58115"/>
    </ligand>
</feature>
<feature type="binding site" evidence="1">
    <location>
        <begin position="88"/>
        <end position="96"/>
    </location>
    <ligand>
        <name>5-phospho-alpha-D-ribose 1-diphosphate</name>
        <dbReference type="ChEBI" id="CHEBI:58017"/>
    </ligand>
</feature>
<feature type="binding site" evidence="1">
    <location>
        <position position="89"/>
    </location>
    <ligand>
        <name>Mg(2+)</name>
        <dbReference type="ChEBI" id="CHEBI:18420"/>
    </ligand>
</feature>
<feature type="binding site" evidence="1">
    <location>
        <begin position="92"/>
        <end position="96"/>
    </location>
    <ligand>
        <name>GMP</name>
        <dbReference type="ChEBI" id="CHEBI:58115"/>
    </ligand>
</feature>
<feature type="binding site" evidence="1">
    <location>
        <position position="92"/>
    </location>
    <ligand>
        <name>guanine</name>
        <dbReference type="ChEBI" id="CHEBI:16235"/>
    </ligand>
</feature>
<feature type="binding site" evidence="1">
    <location>
        <position position="92"/>
    </location>
    <ligand>
        <name>xanthine</name>
        <dbReference type="ChEBI" id="CHEBI:17712"/>
    </ligand>
</feature>
<feature type="binding site" evidence="1">
    <location>
        <begin position="134"/>
        <end position="135"/>
    </location>
    <ligand>
        <name>GMP</name>
        <dbReference type="ChEBI" id="CHEBI:58115"/>
    </ligand>
</feature>
<feature type="binding site" evidence="1">
    <location>
        <position position="135"/>
    </location>
    <ligand>
        <name>guanine</name>
        <dbReference type="ChEBI" id="CHEBI:16235"/>
    </ligand>
</feature>
<feature type="binding site" evidence="1">
    <location>
        <position position="135"/>
    </location>
    <ligand>
        <name>xanthine</name>
        <dbReference type="ChEBI" id="CHEBI:17712"/>
    </ligand>
</feature>
<keyword id="KW-0997">Cell inner membrane</keyword>
<keyword id="KW-1003">Cell membrane</keyword>
<keyword id="KW-0328">Glycosyltransferase</keyword>
<keyword id="KW-0460">Magnesium</keyword>
<keyword id="KW-0472">Membrane</keyword>
<keyword id="KW-0479">Metal-binding</keyword>
<keyword id="KW-0660">Purine salvage</keyword>
<keyword id="KW-0808">Transferase</keyword>